<sequence length="400" mass="45408">MADGGIDRKADEKIQFSTSKEVTVHPTFESMSLKESLLRGIYAYGYESPSAVQSRAIVQICKGRDTIAQAQSGTGKTATFSISMLQVIDTAVRETQALVLSPTRELATQIQSVVMALGDYMNVQCHACIGGTNVGEDIRKLDYGQHIVSGTPGRVADMIRRRHLRTRHIKMLVLDEADELLNQGFREQIYDVYRYLPPATQVVVVSATLPYDVLDMTTKFMTDPVRILVKRDELTLEGLKQYFIAVEKEDWKFDTLCDLYDTLTITQAVIFCNTRRKVDWLTDKMREANFTVSSMHGDMPQKERDSIMQDFRQGNSRVLISTDVWARGIDVQQVSLVINYDLPSNRENYIHRIGRSGRFGRKGVAINFVTSEDVRILRDIELYYSTQIDEMPMNVADLIS</sequence>
<accession>Q9P735</accession>
<accession>Q1K821</accession>
<reference key="1">
    <citation type="journal article" date="2003" name="Nucleic Acids Res.">
        <title>What's in the genome of a filamentous fungus? Analysis of the Neurospora genome sequence.</title>
        <authorList>
            <person name="Mannhaupt G."/>
            <person name="Montrone C."/>
            <person name="Haase D."/>
            <person name="Mewes H.-W."/>
            <person name="Aign V."/>
            <person name="Hoheisel J.D."/>
            <person name="Fartmann B."/>
            <person name="Nyakatura G."/>
            <person name="Kempken F."/>
            <person name="Maier J."/>
            <person name="Schulte U."/>
        </authorList>
    </citation>
    <scope>NUCLEOTIDE SEQUENCE [LARGE SCALE GENOMIC DNA]</scope>
    <source>
        <strain>ATCC 24698 / 74-OR23-1A / CBS 708.71 / DSM 1257 / FGSC 987</strain>
    </source>
</reference>
<reference key="2">
    <citation type="journal article" date="2003" name="Nature">
        <title>The genome sequence of the filamentous fungus Neurospora crassa.</title>
        <authorList>
            <person name="Galagan J.E."/>
            <person name="Calvo S.E."/>
            <person name="Borkovich K.A."/>
            <person name="Selker E.U."/>
            <person name="Read N.D."/>
            <person name="Jaffe D.B."/>
            <person name="FitzHugh W."/>
            <person name="Ma L.-J."/>
            <person name="Smirnov S."/>
            <person name="Purcell S."/>
            <person name="Rehman B."/>
            <person name="Elkins T."/>
            <person name="Engels R."/>
            <person name="Wang S."/>
            <person name="Nielsen C.B."/>
            <person name="Butler J."/>
            <person name="Endrizzi M."/>
            <person name="Qui D."/>
            <person name="Ianakiev P."/>
            <person name="Bell-Pedersen D."/>
            <person name="Nelson M.A."/>
            <person name="Werner-Washburne M."/>
            <person name="Selitrennikoff C.P."/>
            <person name="Kinsey J.A."/>
            <person name="Braun E.L."/>
            <person name="Zelter A."/>
            <person name="Schulte U."/>
            <person name="Kothe G.O."/>
            <person name="Jedd G."/>
            <person name="Mewes H.-W."/>
            <person name="Staben C."/>
            <person name="Marcotte E."/>
            <person name="Greenberg D."/>
            <person name="Roy A."/>
            <person name="Foley K."/>
            <person name="Naylor J."/>
            <person name="Stange-Thomann N."/>
            <person name="Barrett R."/>
            <person name="Gnerre S."/>
            <person name="Kamal M."/>
            <person name="Kamvysselis M."/>
            <person name="Mauceli E.W."/>
            <person name="Bielke C."/>
            <person name="Rudd S."/>
            <person name="Frishman D."/>
            <person name="Krystofova S."/>
            <person name="Rasmussen C."/>
            <person name="Metzenberg R.L."/>
            <person name="Perkins D.D."/>
            <person name="Kroken S."/>
            <person name="Cogoni C."/>
            <person name="Macino G."/>
            <person name="Catcheside D.E.A."/>
            <person name="Li W."/>
            <person name="Pratt R.J."/>
            <person name="Osmani S.A."/>
            <person name="DeSouza C.P.C."/>
            <person name="Glass N.L."/>
            <person name="Orbach M.J."/>
            <person name="Berglund J.A."/>
            <person name="Voelker R."/>
            <person name="Yarden O."/>
            <person name="Plamann M."/>
            <person name="Seiler S."/>
            <person name="Dunlap J.C."/>
            <person name="Radford A."/>
            <person name="Aramayo R."/>
            <person name="Natvig D.O."/>
            <person name="Alex L.A."/>
            <person name="Mannhaupt G."/>
            <person name="Ebbole D.J."/>
            <person name="Freitag M."/>
            <person name="Paulsen I."/>
            <person name="Sachs M.S."/>
            <person name="Lander E.S."/>
            <person name="Nusbaum C."/>
            <person name="Birren B.W."/>
        </authorList>
    </citation>
    <scope>NUCLEOTIDE SEQUENCE [LARGE SCALE GENOMIC DNA]</scope>
    <source>
        <strain>ATCC 24698 / 74-OR23-1A / CBS 708.71 / DSM 1257 / FGSC 987</strain>
    </source>
</reference>
<protein>
    <recommendedName>
        <fullName>ATP-dependent RNA helicase fal-1</fullName>
        <ecNumber>3.6.4.13</ecNumber>
    </recommendedName>
</protein>
<name>FAL1_NEUCR</name>
<gene>
    <name type="primary">fal-1</name>
    <name type="ORF">8D4.050</name>
    <name type="ORF">NCU01234</name>
</gene>
<organism>
    <name type="scientific">Neurospora crassa (strain ATCC 24698 / 74-OR23-1A / CBS 708.71 / DSM 1257 / FGSC 987)</name>
    <dbReference type="NCBI Taxonomy" id="367110"/>
    <lineage>
        <taxon>Eukaryota</taxon>
        <taxon>Fungi</taxon>
        <taxon>Dikarya</taxon>
        <taxon>Ascomycota</taxon>
        <taxon>Pezizomycotina</taxon>
        <taxon>Sordariomycetes</taxon>
        <taxon>Sordariomycetidae</taxon>
        <taxon>Sordariales</taxon>
        <taxon>Sordariaceae</taxon>
        <taxon>Neurospora</taxon>
    </lineage>
</organism>
<evidence type="ECO:0000250" key="1"/>
<evidence type="ECO:0000255" key="2">
    <source>
        <dbReference type="PROSITE-ProRule" id="PRU00541"/>
    </source>
</evidence>
<evidence type="ECO:0000255" key="3">
    <source>
        <dbReference type="PROSITE-ProRule" id="PRU00542"/>
    </source>
</evidence>
<evidence type="ECO:0000305" key="4"/>
<proteinExistence type="inferred from homology"/>
<comment type="function">
    <text evidence="1">ATP-dependent RNA helicase involved in 40S ribosomal subunit biogenesis. Required for the processing and cleavage of 35S pre-rRNA at sites A0, A1, and A2, leading to mature 18S rRNA (By similarity).</text>
</comment>
<comment type="catalytic activity">
    <reaction>
        <text>ATP + H2O = ADP + phosphate + H(+)</text>
        <dbReference type="Rhea" id="RHEA:13065"/>
        <dbReference type="ChEBI" id="CHEBI:15377"/>
        <dbReference type="ChEBI" id="CHEBI:15378"/>
        <dbReference type="ChEBI" id="CHEBI:30616"/>
        <dbReference type="ChEBI" id="CHEBI:43474"/>
        <dbReference type="ChEBI" id="CHEBI:456216"/>
        <dbReference type="EC" id="3.6.4.13"/>
    </reaction>
</comment>
<comment type="subcellular location">
    <subcellularLocation>
        <location evidence="1">Nucleus</location>
        <location evidence="1">Nucleolus</location>
    </subcellularLocation>
</comment>
<comment type="domain">
    <text>The Q motif is unique to and characteristic of the DEAD box family of RNA helicases and controls ATP binding and hydrolysis.</text>
</comment>
<comment type="similarity">
    <text evidence="4">Belongs to the DEAD box helicase family. DDX48/FAL1 subfamily.</text>
</comment>
<dbReference type="EC" id="3.6.4.13"/>
<dbReference type="EMBL" id="AL353819">
    <property type="protein sequence ID" value="CAB88547.2"/>
    <property type="molecule type" value="Genomic_DNA"/>
</dbReference>
<dbReference type="EMBL" id="CM002240">
    <property type="protein sequence ID" value="EAA32364.1"/>
    <property type="molecule type" value="Genomic_DNA"/>
</dbReference>
<dbReference type="PIR" id="T48731">
    <property type="entry name" value="T48731"/>
</dbReference>
<dbReference type="RefSeq" id="XP_961600.1">
    <property type="nucleotide sequence ID" value="XM_956507.2"/>
</dbReference>
<dbReference type="SMR" id="Q9P735"/>
<dbReference type="FunCoup" id="Q9P735">
    <property type="interactions" value="617"/>
</dbReference>
<dbReference type="STRING" id="367110.Q9P735"/>
<dbReference type="PaxDb" id="5141-EFNCRP00000004337"/>
<dbReference type="EnsemblFungi" id="EAA32364">
    <property type="protein sequence ID" value="EAA32364"/>
    <property type="gene ID" value="NCU01234"/>
</dbReference>
<dbReference type="GeneID" id="3877748"/>
<dbReference type="KEGG" id="ncr:NCU01234"/>
<dbReference type="VEuPathDB" id="FungiDB:NCU01234"/>
<dbReference type="HOGENOM" id="CLU_003041_1_0_1"/>
<dbReference type="InParanoid" id="Q9P735"/>
<dbReference type="OMA" id="TRFHDFK"/>
<dbReference type="OrthoDB" id="10265785at2759"/>
<dbReference type="Proteomes" id="UP000001805">
    <property type="component" value="Chromosome 2, Linkage Group V"/>
</dbReference>
<dbReference type="GO" id="GO:0071013">
    <property type="term" value="C:catalytic step 2 spliceosome"/>
    <property type="evidence" value="ECO:0000318"/>
    <property type="project" value="GO_Central"/>
</dbReference>
<dbReference type="GO" id="GO:0030874">
    <property type="term" value="C:nucleolar chromatin"/>
    <property type="evidence" value="ECO:0007669"/>
    <property type="project" value="EnsemblFungi"/>
</dbReference>
<dbReference type="GO" id="GO:0005730">
    <property type="term" value="C:nucleolus"/>
    <property type="evidence" value="ECO:0000318"/>
    <property type="project" value="GO_Central"/>
</dbReference>
<dbReference type="GO" id="GO:0005524">
    <property type="term" value="F:ATP binding"/>
    <property type="evidence" value="ECO:0007669"/>
    <property type="project" value="UniProtKB-KW"/>
</dbReference>
<dbReference type="GO" id="GO:0016887">
    <property type="term" value="F:ATP hydrolysis activity"/>
    <property type="evidence" value="ECO:0007669"/>
    <property type="project" value="RHEA"/>
</dbReference>
<dbReference type="GO" id="GO:0003729">
    <property type="term" value="F:mRNA binding"/>
    <property type="evidence" value="ECO:0000318"/>
    <property type="project" value="GO_Central"/>
</dbReference>
<dbReference type="GO" id="GO:0003724">
    <property type="term" value="F:RNA helicase activity"/>
    <property type="evidence" value="ECO:0000318"/>
    <property type="project" value="GO_Central"/>
</dbReference>
<dbReference type="GO" id="GO:0000398">
    <property type="term" value="P:mRNA splicing, via spliceosome"/>
    <property type="evidence" value="ECO:0000318"/>
    <property type="project" value="GO_Central"/>
</dbReference>
<dbReference type="GO" id="GO:0006364">
    <property type="term" value="P:rRNA processing"/>
    <property type="evidence" value="ECO:0007669"/>
    <property type="project" value="UniProtKB-KW"/>
</dbReference>
<dbReference type="CDD" id="cd18045">
    <property type="entry name" value="DEADc_EIF4AIII_DDX48"/>
    <property type="match status" value="1"/>
</dbReference>
<dbReference type="CDD" id="cd18787">
    <property type="entry name" value="SF2_C_DEAD"/>
    <property type="match status" value="1"/>
</dbReference>
<dbReference type="FunFam" id="3.40.50.300:FF:000031">
    <property type="entry name" value="Eukaryotic initiation factor 4A-III"/>
    <property type="match status" value="1"/>
</dbReference>
<dbReference type="FunFam" id="3.40.50.300:FF:000498">
    <property type="entry name" value="Eukaryotic initiation factor 4A-III"/>
    <property type="match status" value="1"/>
</dbReference>
<dbReference type="Gene3D" id="3.40.50.300">
    <property type="entry name" value="P-loop containing nucleotide triphosphate hydrolases"/>
    <property type="match status" value="2"/>
</dbReference>
<dbReference type="InterPro" id="IPR011545">
    <property type="entry name" value="DEAD/DEAH_box_helicase_dom"/>
</dbReference>
<dbReference type="InterPro" id="IPR014001">
    <property type="entry name" value="Helicase_ATP-bd"/>
</dbReference>
<dbReference type="InterPro" id="IPR001650">
    <property type="entry name" value="Helicase_C-like"/>
</dbReference>
<dbReference type="InterPro" id="IPR027417">
    <property type="entry name" value="P-loop_NTPase"/>
</dbReference>
<dbReference type="InterPro" id="IPR000629">
    <property type="entry name" value="RNA-helicase_DEAD-box_CS"/>
</dbReference>
<dbReference type="InterPro" id="IPR014014">
    <property type="entry name" value="RNA_helicase_DEAD_Q_motif"/>
</dbReference>
<dbReference type="PANTHER" id="PTHR47958">
    <property type="entry name" value="ATP-DEPENDENT RNA HELICASE DBP3"/>
    <property type="match status" value="1"/>
</dbReference>
<dbReference type="Pfam" id="PF00270">
    <property type="entry name" value="DEAD"/>
    <property type="match status" value="1"/>
</dbReference>
<dbReference type="Pfam" id="PF00271">
    <property type="entry name" value="Helicase_C"/>
    <property type="match status" value="1"/>
</dbReference>
<dbReference type="SMART" id="SM00487">
    <property type="entry name" value="DEXDc"/>
    <property type="match status" value="1"/>
</dbReference>
<dbReference type="SMART" id="SM00490">
    <property type="entry name" value="HELICc"/>
    <property type="match status" value="1"/>
</dbReference>
<dbReference type="SUPFAM" id="SSF52540">
    <property type="entry name" value="P-loop containing nucleoside triphosphate hydrolases"/>
    <property type="match status" value="1"/>
</dbReference>
<dbReference type="PROSITE" id="PS00039">
    <property type="entry name" value="DEAD_ATP_HELICASE"/>
    <property type="match status" value="1"/>
</dbReference>
<dbReference type="PROSITE" id="PS51192">
    <property type="entry name" value="HELICASE_ATP_BIND_1"/>
    <property type="match status" value="1"/>
</dbReference>
<dbReference type="PROSITE" id="PS51194">
    <property type="entry name" value="HELICASE_CTER"/>
    <property type="match status" value="1"/>
</dbReference>
<dbReference type="PROSITE" id="PS51195">
    <property type="entry name" value="Q_MOTIF"/>
    <property type="match status" value="1"/>
</dbReference>
<keyword id="KW-0067">ATP-binding</keyword>
<keyword id="KW-0347">Helicase</keyword>
<keyword id="KW-0378">Hydrolase</keyword>
<keyword id="KW-0547">Nucleotide-binding</keyword>
<keyword id="KW-0539">Nucleus</keyword>
<keyword id="KW-1185">Reference proteome</keyword>
<keyword id="KW-0690">Ribosome biogenesis</keyword>
<keyword id="KW-0694">RNA-binding</keyword>
<keyword id="KW-0698">rRNA processing</keyword>
<feature type="chain" id="PRO_0000232150" description="ATP-dependent RNA helicase fal-1">
    <location>
        <begin position="1"/>
        <end position="400"/>
    </location>
</feature>
<feature type="domain" description="Helicase ATP-binding" evidence="2">
    <location>
        <begin position="57"/>
        <end position="227"/>
    </location>
</feature>
<feature type="domain" description="Helicase C-terminal" evidence="3">
    <location>
        <begin position="238"/>
        <end position="399"/>
    </location>
</feature>
<feature type="short sequence motif" description="Q motif">
    <location>
        <begin position="26"/>
        <end position="54"/>
    </location>
</feature>
<feature type="short sequence motif" description="DEAD box">
    <location>
        <begin position="175"/>
        <end position="178"/>
    </location>
</feature>
<feature type="binding site" evidence="2">
    <location>
        <begin position="70"/>
        <end position="77"/>
    </location>
    <ligand>
        <name>ATP</name>
        <dbReference type="ChEBI" id="CHEBI:30616"/>
    </ligand>
</feature>